<sequence length="257" mass="28414">MLAKRIIPCLDVKDGQVVKGVQFRNHEIIGDIVPLAQRYAEEGADELVFYDITASSDGRVVDKSWVARVAEVIDIPFCVAGGIKTAEDAAKILEFGADKVSINSPALANPELITELADKFGVQCIVVGIDSYFDKETGKYQVYQFTGDEERTKATKWETKDWVQEVQKRGAGEIVLNMMNQDGVRNGYDLEQLNMVREVCHVPLIASGGAGEMVHFADAYNKTNVDGALAASVFHKQIINIGELKDYLAEQDVEVRR</sequence>
<proteinExistence type="inferred from homology"/>
<keyword id="KW-0028">Amino-acid biosynthesis</keyword>
<keyword id="KW-0963">Cytoplasm</keyword>
<keyword id="KW-0368">Histidine biosynthesis</keyword>
<keyword id="KW-0456">Lyase</keyword>
<evidence type="ECO:0000255" key="1">
    <source>
        <dbReference type="HAMAP-Rule" id="MF_01013"/>
    </source>
</evidence>
<gene>
    <name evidence="1" type="primary">hisF</name>
    <name type="ordered locus">VFMJ11_1101</name>
</gene>
<protein>
    <recommendedName>
        <fullName evidence="1">Imidazole glycerol phosphate synthase subunit HisF</fullName>
        <ecNumber evidence="1">4.3.2.10</ecNumber>
    </recommendedName>
    <alternativeName>
        <fullName evidence="1">IGP synthase cyclase subunit</fullName>
    </alternativeName>
    <alternativeName>
        <fullName evidence="1">IGP synthase subunit HisF</fullName>
    </alternativeName>
    <alternativeName>
        <fullName evidence="1">ImGP synthase subunit HisF</fullName>
        <shortName evidence="1">IGPS subunit HisF</shortName>
    </alternativeName>
</protein>
<feature type="chain" id="PRO_1000135058" description="Imidazole glycerol phosphate synthase subunit HisF">
    <location>
        <begin position="1"/>
        <end position="257"/>
    </location>
</feature>
<feature type="active site" evidence="1">
    <location>
        <position position="11"/>
    </location>
</feature>
<feature type="active site" evidence="1">
    <location>
        <position position="130"/>
    </location>
</feature>
<accession>B5FDA4</accession>
<name>HIS6_ALIFM</name>
<comment type="function">
    <text evidence="1">IGPS catalyzes the conversion of PRFAR and glutamine to IGP, AICAR and glutamate. The HisF subunit catalyzes the cyclization activity that produces IGP and AICAR from PRFAR using the ammonia provided by the HisH subunit.</text>
</comment>
<comment type="catalytic activity">
    <reaction evidence="1">
        <text>5-[(5-phospho-1-deoxy-D-ribulos-1-ylimino)methylamino]-1-(5-phospho-beta-D-ribosyl)imidazole-4-carboxamide + L-glutamine = D-erythro-1-(imidazol-4-yl)glycerol 3-phosphate + 5-amino-1-(5-phospho-beta-D-ribosyl)imidazole-4-carboxamide + L-glutamate + H(+)</text>
        <dbReference type="Rhea" id="RHEA:24793"/>
        <dbReference type="ChEBI" id="CHEBI:15378"/>
        <dbReference type="ChEBI" id="CHEBI:29985"/>
        <dbReference type="ChEBI" id="CHEBI:58278"/>
        <dbReference type="ChEBI" id="CHEBI:58359"/>
        <dbReference type="ChEBI" id="CHEBI:58475"/>
        <dbReference type="ChEBI" id="CHEBI:58525"/>
        <dbReference type="EC" id="4.3.2.10"/>
    </reaction>
</comment>
<comment type="pathway">
    <text evidence="1">Amino-acid biosynthesis; L-histidine biosynthesis; L-histidine from 5-phospho-alpha-D-ribose 1-diphosphate: step 5/9.</text>
</comment>
<comment type="subunit">
    <text evidence="1">Heterodimer of HisH and HisF.</text>
</comment>
<comment type="subcellular location">
    <subcellularLocation>
        <location evidence="1">Cytoplasm</location>
    </subcellularLocation>
</comment>
<comment type="similarity">
    <text evidence="1">Belongs to the HisA/HisF family.</text>
</comment>
<reference key="1">
    <citation type="submission" date="2008-08" db="EMBL/GenBank/DDBJ databases">
        <title>Complete sequence of Vibrio fischeri strain MJ11.</title>
        <authorList>
            <person name="Mandel M.J."/>
            <person name="Stabb E.V."/>
            <person name="Ruby E.G."/>
            <person name="Ferriera S."/>
            <person name="Johnson J."/>
            <person name="Kravitz S."/>
            <person name="Beeson K."/>
            <person name="Sutton G."/>
            <person name="Rogers Y.-H."/>
            <person name="Friedman R."/>
            <person name="Frazier M."/>
            <person name="Venter J.C."/>
        </authorList>
    </citation>
    <scope>NUCLEOTIDE SEQUENCE [LARGE SCALE GENOMIC DNA]</scope>
    <source>
        <strain>MJ11</strain>
    </source>
</reference>
<dbReference type="EC" id="4.3.2.10" evidence="1"/>
<dbReference type="EMBL" id="CP001139">
    <property type="protein sequence ID" value="ACH65784.1"/>
    <property type="molecule type" value="Genomic_DNA"/>
</dbReference>
<dbReference type="RefSeq" id="WP_012533285.1">
    <property type="nucleotide sequence ID" value="NC_011184.1"/>
</dbReference>
<dbReference type="SMR" id="B5FDA4"/>
<dbReference type="KEGG" id="vfm:VFMJ11_1101"/>
<dbReference type="HOGENOM" id="CLU_048577_4_0_6"/>
<dbReference type="UniPathway" id="UPA00031">
    <property type="reaction ID" value="UER00010"/>
</dbReference>
<dbReference type="Proteomes" id="UP000001857">
    <property type="component" value="Chromosome I"/>
</dbReference>
<dbReference type="GO" id="GO:0005737">
    <property type="term" value="C:cytoplasm"/>
    <property type="evidence" value="ECO:0007669"/>
    <property type="project" value="UniProtKB-SubCell"/>
</dbReference>
<dbReference type="GO" id="GO:0000107">
    <property type="term" value="F:imidazoleglycerol-phosphate synthase activity"/>
    <property type="evidence" value="ECO:0007669"/>
    <property type="project" value="UniProtKB-UniRule"/>
</dbReference>
<dbReference type="GO" id="GO:0016829">
    <property type="term" value="F:lyase activity"/>
    <property type="evidence" value="ECO:0007669"/>
    <property type="project" value="UniProtKB-KW"/>
</dbReference>
<dbReference type="GO" id="GO:0000105">
    <property type="term" value="P:L-histidine biosynthetic process"/>
    <property type="evidence" value="ECO:0007669"/>
    <property type="project" value="UniProtKB-UniRule"/>
</dbReference>
<dbReference type="CDD" id="cd04731">
    <property type="entry name" value="HisF"/>
    <property type="match status" value="1"/>
</dbReference>
<dbReference type="FunFam" id="3.20.20.70:FF:000006">
    <property type="entry name" value="Imidazole glycerol phosphate synthase subunit HisF"/>
    <property type="match status" value="1"/>
</dbReference>
<dbReference type="Gene3D" id="3.20.20.70">
    <property type="entry name" value="Aldolase class I"/>
    <property type="match status" value="1"/>
</dbReference>
<dbReference type="HAMAP" id="MF_01013">
    <property type="entry name" value="HisF"/>
    <property type="match status" value="1"/>
</dbReference>
<dbReference type="InterPro" id="IPR013785">
    <property type="entry name" value="Aldolase_TIM"/>
</dbReference>
<dbReference type="InterPro" id="IPR006062">
    <property type="entry name" value="His_biosynth"/>
</dbReference>
<dbReference type="InterPro" id="IPR004651">
    <property type="entry name" value="HisF"/>
</dbReference>
<dbReference type="InterPro" id="IPR050064">
    <property type="entry name" value="IGPS_HisA/HisF"/>
</dbReference>
<dbReference type="InterPro" id="IPR011060">
    <property type="entry name" value="RibuloseP-bd_barrel"/>
</dbReference>
<dbReference type="NCBIfam" id="TIGR00735">
    <property type="entry name" value="hisF"/>
    <property type="match status" value="1"/>
</dbReference>
<dbReference type="PANTHER" id="PTHR21235:SF2">
    <property type="entry name" value="IMIDAZOLE GLYCEROL PHOSPHATE SYNTHASE HISHF"/>
    <property type="match status" value="1"/>
</dbReference>
<dbReference type="PANTHER" id="PTHR21235">
    <property type="entry name" value="IMIDAZOLE GLYCEROL PHOSPHATE SYNTHASE SUBUNIT HISF/H IGP SYNTHASE SUBUNIT HISF/H"/>
    <property type="match status" value="1"/>
</dbReference>
<dbReference type="Pfam" id="PF00977">
    <property type="entry name" value="His_biosynth"/>
    <property type="match status" value="1"/>
</dbReference>
<dbReference type="SUPFAM" id="SSF51366">
    <property type="entry name" value="Ribulose-phoshate binding barrel"/>
    <property type="match status" value="1"/>
</dbReference>
<organism>
    <name type="scientific">Aliivibrio fischeri (strain MJ11)</name>
    <name type="common">Vibrio fischeri</name>
    <dbReference type="NCBI Taxonomy" id="388396"/>
    <lineage>
        <taxon>Bacteria</taxon>
        <taxon>Pseudomonadati</taxon>
        <taxon>Pseudomonadota</taxon>
        <taxon>Gammaproteobacteria</taxon>
        <taxon>Vibrionales</taxon>
        <taxon>Vibrionaceae</taxon>
        <taxon>Aliivibrio</taxon>
    </lineage>
</organism>